<sequence length="365" mass="39632">MSQRDFYEILGIAKNTDVKQIKKAYKRLAMKHHPDRVKDNKELAEKKFKEIQKAYAILSDTQKRQAYDQFGHAGINGNAGATSGTSFSSSGFGDIFGDIFGGGSQQSNNRGSDLRYDLEIDLKEAAQGTTVKIRIPKNETCDTCSGTGAKPGTSVKTCLTCGGAGQIQIQQGFFAVQRPCNACSGTGQRIESTCNNCHGKGVVHKQKTLSVKIPAGVDTGNRIRLSGEGEAGIRGGLSGDLYVQIHVKKHAIFERQDSDLYCEVPIDFATAVLGGQVEVPTLDNKLNIKVPAGTQTGKLFRLRSKGITHLQHGGSGDVICKVKLETPINLSKKQQDLLQKFSNSCGKKHHPESNSFFGKMKSFFE</sequence>
<name>DNAJ_VESOH</name>
<accession>A5CX57</accession>
<feature type="chain" id="PRO_1000085326" description="Chaperone protein DnaJ">
    <location>
        <begin position="1"/>
        <end position="365"/>
    </location>
</feature>
<feature type="domain" description="J" evidence="1">
    <location>
        <begin position="5"/>
        <end position="71"/>
    </location>
</feature>
<feature type="repeat" description="CXXCXGXG motif">
    <location>
        <begin position="141"/>
        <end position="148"/>
    </location>
</feature>
<feature type="repeat" description="CXXCXGXG motif">
    <location>
        <begin position="158"/>
        <end position="165"/>
    </location>
</feature>
<feature type="repeat" description="CXXCXGXG motif">
    <location>
        <begin position="180"/>
        <end position="187"/>
    </location>
</feature>
<feature type="repeat" description="CXXCXGXG motif">
    <location>
        <begin position="194"/>
        <end position="201"/>
    </location>
</feature>
<feature type="zinc finger region" description="CR-type" evidence="1">
    <location>
        <begin position="128"/>
        <end position="206"/>
    </location>
</feature>
<feature type="binding site" evidence="1">
    <location>
        <position position="141"/>
    </location>
    <ligand>
        <name>Zn(2+)</name>
        <dbReference type="ChEBI" id="CHEBI:29105"/>
        <label>1</label>
    </ligand>
</feature>
<feature type="binding site" evidence="1">
    <location>
        <position position="144"/>
    </location>
    <ligand>
        <name>Zn(2+)</name>
        <dbReference type="ChEBI" id="CHEBI:29105"/>
        <label>1</label>
    </ligand>
</feature>
<feature type="binding site" evidence="1">
    <location>
        <position position="158"/>
    </location>
    <ligand>
        <name>Zn(2+)</name>
        <dbReference type="ChEBI" id="CHEBI:29105"/>
        <label>2</label>
    </ligand>
</feature>
<feature type="binding site" evidence="1">
    <location>
        <position position="161"/>
    </location>
    <ligand>
        <name>Zn(2+)</name>
        <dbReference type="ChEBI" id="CHEBI:29105"/>
        <label>2</label>
    </ligand>
</feature>
<feature type="binding site" evidence="1">
    <location>
        <position position="180"/>
    </location>
    <ligand>
        <name>Zn(2+)</name>
        <dbReference type="ChEBI" id="CHEBI:29105"/>
        <label>2</label>
    </ligand>
</feature>
<feature type="binding site" evidence="1">
    <location>
        <position position="183"/>
    </location>
    <ligand>
        <name>Zn(2+)</name>
        <dbReference type="ChEBI" id="CHEBI:29105"/>
        <label>2</label>
    </ligand>
</feature>
<feature type="binding site" evidence="1">
    <location>
        <position position="194"/>
    </location>
    <ligand>
        <name>Zn(2+)</name>
        <dbReference type="ChEBI" id="CHEBI:29105"/>
        <label>1</label>
    </ligand>
</feature>
<feature type="binding site" evidence="1">
    <location>
        <position position="197"/>
    </location>
    <ligand>
        <name>Zn(2+)</name>
        <dbReference type="ChEBI" id="CHEBI:29105"/>
        <label>1</label>
    </ligand>
</feature>
<evidence type="ECO:0000255" key="1">
    <source>
        <dbReference type="HAMAP-Rule" id="MF_01152"/>
    </source>
</evidence>
<comment type="function">
    <text evidence="1">Participates actively in the response to hyperosmotic and heat shock by preventing the aggregation of stress-denatured proteins and by disaggregating proteins, also in an autonomous, DnaK-independent fashion. Unfolded proteins bind initially to DnaJ; upon interaction with the DnaJ-bound protein, DnaK hydrolyzes its bound ATP, resulting in the formation of a stable complex. GrpE releases ADP from DnaK; ATP binding to DnaK triggers the release of the substrate protein, thus completing the reaction cycle. Several rounds of ATP-dependent interactions between DnaJ, DnaK and GrpE are required for fully efficient folding. Also involved, together with DnaK and GrpE, in the DNA replication of plasmids through activation of initiation proteins.</text>
</comment>
<comment type="cofactor">
    <cofactor evidence="1">
        <name>Zn(2+)</name>
        <dbReference type="ChEBI" id="CHEBI:29105"/>
    </cofactor>
    <text evidence="1">Binds 2 Zn(2+) ions per monomer.</text>
</comment>
<comment type="subunit">
    <text evidence="1">Homodimer.</text>
</comment>
<comment type="subcellular location">
    <subcellularLocation>
        <location evidence="1">Cytoplasm</location>
    </subcellularLocation>
</comment>
<comment type="domain">
    <text evidence="1">The J domain is necessary and sufficient to stimulate DnaK ATPase activity. Zinc center 1 plays an important role in the autonomous, DnaK-independent chaperone activity of DnaJ. Zinc center 2 is essential for interaction with DnaK and for DnaJ activity.</text>
</comment>
<comment type="similarity">
    <text evidence="1">Belongs to the DnaJ family.</text>
</comment>
<organism>
    <name type="scientific">Vesicomyosocius okutanii subsp. Calyptogena okutanii (strain HA)</name>
    <dbReference type="NCBI Taxonomy" id="412965"/>
    <lineage>
        <taxon>Bacteria</taxon>
        <taxon>Pseudomonadati</taxon>
        <taxon>Pseudomonadota</taxon>
        <taxon>Gammaproteobacteria</taxon>
        <taxon>Candidatus Pseudothioglobaceae</taxon>
        <taxon>Candidatus Vesicomyosocius</taxon>
    </lineage>
</organism>
<protein>
    <recommendedName>
        <fullName evidence="1">Chaperone protein DnaJ</fullName>
    </recommendedName>
</protein>
<dbReference type="EMBL" id="AP009247">
    <property type="protein sequence ID" value="BAF61472.1"/>
    <property type="molecule type" value="Genomic_DNA"/>
</dbReference>
<dbReference type="RefSeq" id="WP_011929742.1">
    <property type="nucleotide sequence ID" value="NC_009465.1"/>
</dbReference>
<dbReference type="SMR" id="A5CX57"/>
<dbReference type="STRING" id="412965.COSY_0347"/>
<dbReference type="KEGG" id="vok:COSY_0347"/>
<dbReference type="eggNOG" id="COG0484">
    <property type="taxonomic scope" value="Bacteria"/>
</dbReference>
<dbReference type="HOGENOM" id="CLU_017633_0_7_6"/>
<dbReference type="OrthoDB" id="9779889at2"/>
<dbReference type="Proteomes" id="UP000000247">
    <property type="component" value="Chromosome"/>
</dbReference>
<dbReference type="GO" id="GO:0005737">
    <property type="term" value="C:cytoplasm"/>
    <property type="evidence" value="ECO:0007669"/>
    <property type="project" value="UniProtKB-SubCell"/>
</dbReference>
<dbReference type="GO" id="GO:0005524">
    <property type="term" value="F:ATP binding"/>
    <property type="evidence" value="ECO:0007669"/>
    <property type="project" value="InterPro"/>
</dbReference>
<dbReference type="GO" id="GO:0031072">
    <property type="term" value="F:heat shock protein binding"/>
    <property type="evidence" value="ECO:0007669"/>
    <property type="project" value="InterPro"/>
</dbReference>
<dbReference type="GO" id="GO:0051082">
    <property type="term" value="F:unfolded protein binding"/>
    <property type="evidence" value="ECO:0007669"/>
    <property type="project" value="UniProtKB-UniRule"/>
</dbReference>
<dbReference type="GO" id="GO:0008270">
    <property type="term" value="F:zinc ion binding"/>
    <property type="evidence" value="ECO:0007669"/>
    <property type="project" value="UniProtKB-UniRule"/>
</dbReference>
<dbReference type="GO" id="GO:0051085">
    <property type="term" value="P:chaperone cofactor-dependent protein refolding"/>
    <property type="evidence" value="ECO:0007669"/>
    <property type="project" value="TreeGrafter"/>
</dbReference>
<dbReference type="GO" id="GO:0006260">
    <property type="term" value="P:DNA replication"/>
    <property type="evidence" value="ECO:0007669"/>
    <property type="project" value="UniProtKB-KW"/>
</dbReference>
<dbReference type="GO" id="GO:0042026">
    <property type="term" value="P:protein refolding"/>
    <property type="evidence" value="ECO:0007669"/>
    <property type="project" value="TreeGrafter"/>
</dbReference>
<dbReference type="GO" id="GO:0009408">
    <property type="term" value="P:response to heat"/>
    <property type="evidence" value="ECO:0007669"/>
    <property type="project" value="InterPro"/>
</dbReference>
<dbReference type="CDD" id="cd06257">
    <property type="entry name" value="DnaJ"/>
    <property type="match status" value="1"/>
</dbReference>
<dbReference type="CDD" id="cd10747">
    <property type="entry name" value="DnaJ_C"/>
    <property type="match status" value="1"/>
</dbReference>
<dbReference type="CDD" id="cd10719">
    <property type="entry name" value="DnaJ_zf"/>
    <property type="match status" value="1"/>
</dbReference>
<dbReference type="FunFam" id="2.10.230.10:FF:000002">
    <property type="entry name" value="Molecular chaperone DnaJ"/>
    <property type="match status" value="1"/>
</dbReference>
<dbReference type="FunFam" id="2.60.260.20:FF:000004">
    <property type="entry name" value="Molecular chaperone DnaJ"/>
    <property type="match status" value="1"/>
</dbReference>
<dbReference type="Gene3D" id="1.10.287.110">
    <property type="entry name" value="DnaJ domain"/>
    <property type="match status" value="1"/>
</dbReference>
<dbReference type="Gene3D" id="2.10.230.10">
    <property type="entry name" value="Heat shock protein DnaJ, cysteine-rich domain"/>
    <property type="match status" value="1"/>
</dbReference>
<dbReference type="Gene3D" id="2.60.260.20">
    <property type="entry name" value="Urease metallochaperone UreE, N-terminal domain"/>
    <property type="match status" value="2"/>
</dbReference>
<dbReference type="HAMAP" id="MF_01152">
    <property type="entry name" value="DnaJ"/>
    <property type="match status" value="1"/>
</dbReference>
<dbReference type="InterPro" id="IPR012724">
    <property type="entry name" value="DnaJ"/>
</dbReference>
<dbReference type="InterPro" id="IPR002939">
    <property type="entry name" value="DnaJ_C"/>
</dbReference>
<dbReference type="InterPro" id="IPR001623">
    <property type="entry name" value="DnaJ_domain"/>
</dbReference>
<dbReference type="InterPro" id="IPR018253">
    <property type="entry name" value="DnaJ_domain_CS"/>
</dbReference>
<dbReference type="InterPro" id="IPR008971">
    <property type="entry name" value="HSP40/DnaJ_pept-bd"/>
</dbReference>
<dbReference type="InterPro" id="IPR001305">
    <property type="entry name" value="HSP_DnaJ_Cys-rich_dom"/>
</dbReference>
<dbReference type="InterPro" id="IPR036410">
    <property type="entry name" value="HSP_DnaJ_Cys-rich_dom_sf"/>
</dbReference>
<dbReference type="InterPro" id="IPR036869">
    <property type="entry name" value="J_dom_sf"/>
</dbReference>
<dbReference type="NCBIfam" id="TIGR02349">
    <property type="entry name" value="DnaJ_bact"/>
    <property type="match status" value="1"/>
</dbReference>
<dbReference type="NCBIfam" id="NF008035">
    <property type="entry name" value="PRK10767.1"/>
    <property type="match status" value="1"/>
</dbReference>
<dbReference type="PANTHER" id="PTHR43096:SF48">
    <property type="entry name" value="CHAPERONE PROTEIN DNAJ"/>
    <property type="match status" value="1"/>
</dbReference>
<dbReference type="PANTHER" id="PTHR43096">
    <property type="entry name" value="DNAJ HOMOLOG 1, MITOCHONDRIAL-RELATED"/>
    <property type="match status" value="1"/>
</dbReference>
<dbReference type="Pfam" id="PF00226">
    <property type="entry name" value="DnaJ"/>
    <property type="match status" value="1"/>
</dbReference>
<dbReference type="Pfam" id="PF01556">
    <property type="entry name" value="DnaJ_C"/>
    <property type="match status" value="1"/>
</dbReference>
<dbReference type="Pfam" id="PF00684">
    <property type="entry name" value="DnaJ_CXXCXGXG"/>
    <property type="match status" value="1"/>
</dbReference>
<dbReference type="PRINTS" id="PR00625">
    <property type="entry name" value="JDOMAIN"/>
</dbReference>
<dbReference type="SMART" id="SM00271">
    <property type="entry name" value="DnaJ"/>
    <property type="match status" value="1"/>
</dbReference>
<dbReference type="SUPFAM" id="SSF46565">
    <property type="entry name" value="Chaperone J-domain"/>
    <property type="match status" value="1"/>
</dbReference>
<dbReference type="SUPFAM" id="SSF57938">
    <property type="entry name" value="DnaJ/Hsp40 cysteine-rich domain"/>
    <property type="match status" value="1"/>
</dbReference>
<dbReference type="SUPFAM" id="SSF49493">
    <property type="entry name" value="HSP40/DnaJ peptide-binding domain"/>
    <property type="match status" value="2"/>
</dbReference>
<dbReference type="PROSITE" id="PS00636">
    <property type="entry name" value="DNAJ_1"/>
    <property type="match status" value="1"/>
</dbReference>
<dbReference type="PROSITE" id="PS50076">
    <property type="entry name" value="DNAJ_2"/>
    <property type="match status" value="1"/>
</dbReference>
<dbReference type="PROSITE" id="PS51188">
    <property type="entry name" value="ZF_CR"/>
    <property type="match status" value="1"/>
</dbReference>
<proteinExistence type="inferred from homology"/>
<reference key="1">
    <citation type="journal article" date="2007" name="Curr. Biol.">
        <title>Reduced genome of the thioautotrophic intracellular symbiont in a deep-sea clam, Calyptogena okutanii.</title>
        <authorList>
            <person name="Kuwahara H."/>
            <person name="Yoshida T."/>
            <person name="Takaki Y."/>
            <person name="Shimamura S."/>
            <person name="Nishi S."/>
            <person name="Harada M."/>
            <person name="Matsuyama K."/>
            <person name="Takishita K."/>
            <person name="Kawato M."/>
            <person name="Uematsu K."/>
            <person name="Fujiwara Y."/>
            <person name="Sato T."/>
            <person name="Kato C."/>
            <person name="Kitagawa M."/>
            <person name="Kato I."/>
            <person name="Maruyama T."/>
        </authorList>
    </citation>
    <scope>NUCLEOTIDE SEQUENCE [LARGE SCALE GENOMIC DNA]</scope>
    <source>
        <strain>HA</strain>
    </source>
</reference>
<gene>
    <name evidence="1" type="primary">dnaJ</name>
    <name type="ordered locus">COSY_0347</name>
</gene>
<keyword id="KW-0143">Chaperone</keyword>
<keyword id="KW-0963">Cytoplasm</keyword>
<keyword id="KW-0235">DNA replication</keyword>
<keyword id="KW-0479">Metal-binding</keyword>
<keyword id="KW-1185">Reference proteome</keyword>
<keyword id="KW-0677">Repeat</keyword>
<keyword id="KW-0346">Stress response</keyword>
<keyword id="KW-0862">Zinc</keyword>
<keyword id="KW-0863">Zinc-finger</keyword>